<organism>
    <name type="scientific">Rhodopirellula baltica (strain DSM 10527 / NCIMB 13988 / SH1)</name>
    <dbReference type="NCBI Taxonomy" id="243090"/>
    <lineage>
        <taxon>Bacteria</taxon>
        <taxon>Pseudomonadati</taxon>
        <taxon>Planctomycetota</taxon>
        <taxon>Planctomycetia</taxon>
        <taxon>Pirellulales</taxon>
        <taxon>Pirellulaceae</taxon>
        <taxon>Rhodopirellula</taxon>
    </lineage>
</organism>
<gene>
    <name evidence="1" type="primary">surE</name>
    <name type="ordered locus">RB9952</name>
</gene>
<keyword id="KW-0963">Cytoplasm</keyword>
<keyword id="KW-0378">Hydrolase</keyword>
<keyword id="KW-0479">Metal-binding</keyword>
<keyword id="KW-0547">Nucleotide-binding</keyword>
<keyword id="KW-1185">Reference proteome</keyword>
<comment type="function">
    <text evidence="1">Nucleotidase that shows phosphatase activity on nucleoside 5'-monophosphates.</text>
</comment>
<comment type="catalytic activity">
    <reaction evidence="1">
        <text>a ribonucleoside 5'-phosphate + H2O = a ribonucleoside + phosphate</text>
        <dbReference type="Rhea" id="RHEA:12484"/>
        <dbReference type="ChEBI" id="CHEBI:15377"/>
        <dbReference type="ChEBI" id="CHEBI:18254"/>
        <dbReference type="ChEBI" id="CHEBI:43474"/>
        <dbReference type="ChEBI" id="CHEBI:58043"/>
        <dbReference type="EC" id="3.1.3.5"/>
    </reaction>
</comment>
<comment type="cofactor">
    <cofactor evidence="1">
        <name>a divalent metal cation</name>
        <dbReference type="ChEBI" id="CHEBI:60240"/>
    </cofactor>
    <text evidence="1">Binds 1 divalent metal cation per subunit.</text>
</comment>
<comment type="subcellular location">
    <subcellularLocation>
        <location evidence="1">Cytoplasm</location>
    </subcellularLocation>
</comment>
<comment type="similarity">
    <text evidence="1">Belongs to the SurE nucleotidase family.</text>
</comment>
<comment type="sequence caution" evidence="2">
    <conflict type="erroneous initiation">
        <sequence resource="EMBL-CDS" id="CAD76546"/>
    </conflict>
</comment>
<proteinExistence type="inferred from homology"/>
<dbReference type="EC" id="3.1.3.5" evidence="1"/>
<dbReference type="EMBL" id="BX294150">
    <property type="protein sequence ID" value="CAD76546.1"/>
    <property type="status" value="ALT_INIT"/>
    <property type="molecule type" value="Genomic_DNA"/>
</dbReference>
<dbReference type="RefSeq" id="NP_869160.1">
    <property type="nucleotide sequence ID" value="NC_005027.1"/>
</dbReference>
<dbReference type="RefSeq" id="WP_037201557.1">
    <property type="nucleotide sequence ID" value="NC_005027.1"/>
</dbReference>
<dbReference type="SMR" id="Q7UKT6"/>
<dbReference type="FunCoup" id="Q7UKT6">
    <property type="interactions" value="169"/>
</dbReference>
<dbReference type="STRING" id="243090.RB9952"/>
<dbReference type="EnsemblBacteria" id="CAD76546">
    <property type="protein sequence ID" value="CAD76546"/>
    <property type="gene ID" value="RB9952"/>
</dbReference>
<dbReference type="KEGG" id="rba:RB9952"/>
<dbReference type="PATRIC" id="fig|243090.15.peg.4790"/>
<dbReference type="eggNOG" id="COG0496">
    <property type="taxonomic scope" value="Bacteria"/>
</dbReference>
<dbReference type="HOGENOM" id="CLU_045192_1_3_0"/>
<dbReference type="InParanoid" id="Q7UKT6"/>
<dbReference type="OrthoDB" id="9780815at2"/>
<dbReference type="Proteomes" id="UP000001025">
    <property type="component" value="Chromosome"/>
</dbReference>
<dbReference type="GO" id="GO:0005737">
    <property type="term" value="C:cytoplasm"/>
    <property type="evidence" value="ECO:0007669"/>
    <property type="project" value="UniProtKB-SubCell"/>
</dbReference>
<dbReference type="GO" id="GO:0008254">
    <property type="term" value="F:3'-nucleotidase activity"/>
    <property type="evidence" value="ECO:0000318"/>
    <property type="project" value="GO_Central"/>
</dbReference>
<dbReference type="GO" id="GO:0008253">
    <property type="term" value="F:5'-nucleotidase activity"/>
    <property type="evidence" value="ECO:0000318"/>
    <property type="project" value="GO_Central"/>
</dbReference>
<dbReference type="GO" id="GO:0004309">
    <property type="term" value="F:exopolyphosphatase activity"/>
    <property type="evidence" value="ECO:0000318"/>
    <property type="project" value="GO_Central"/>
</dbReference>
<dbReference type="GO" id="GO:0046872">
    <property type="term" value="F:metal ion binding"/>
    <property type="evidence" value="ECO:0007669"/>
    <property type="project" value="UniProtKB-UniRule"/>
</dbReference>
<dbReference type="GO" id="GO:0000166">
    <property type="term" value="F:nucleotide binding"/>
    <property type="evidence" value="ECO:0007669"/>
    <property type="project" value="UniProtKB-KW"/>
</dbReference>
<dbReference type="FunFam" id="3.40.1210.10:FF:000001">
    <property type="entry name" value="5'/3'-nucleotidase SurE"/>
    <property type="match status" value="1"/>
</dbReference>
<dbReference type="Gene3D" id="3.40.1210.10">
    <property type="entry name" value="Survival protein SurE-like phosphatase/nucleotidase"/>
    <property type="match status" value="1"/>
</dbReference>
<dbReference type="HAMAP" id="MF_00060">
    <property type="entry name" value="SurE"/>
    <property type="match status" value="1"/>
</dbReference>
<dbReference type="InterPro" id="IPR030048">
    <property type="entry name" value="SurE"/>
</dbReference>
<dbReference type="InterPro" id="IPR002828">
    <property type="entry name" value="SurE-like_Pase/nucleotidase"/>
</dbReference>
<dbReference type="InterPro" id="IPR036523">
    <property type="entry name" value="SurE-like_sf"/>
</dbReference>
<dbReference type="NCBIfam" id="NF001490">
    <property type="entry name" value="PRK00346.1-4"/>
    <property type="match status" value="1"/>
</dbReference>
<dbReference type="NCBIfam" id="TIGR00087">
    <property type="entry name" value="surE"/>
    <property type="match status" value="1"/>
</dbReference>
<dbReference type="PANTHER" id="PTHR30457">
    <property type="entry name" value="5'-NUCLEOTIDASE SURE"/>
    <property type="match status" value="1"/>
</dbReference>
<dbReference type="PANTHER" id="PTHR30457:SF12">
    <property type="entry name" value="5'_3'-NUCLEOTIDASE SURE"/>
    <property type="match status" value="1"/>
</dbReference>
<dbReference type="Pfam" id="PF01975">
    <property type="entry name" value="SurE"/>
    <property type="match status" value="1"/>
</dbReference>
<dbReference type="SUPFAM" id="SSF64167">
    <property type="entry name" value="SurE-like"/>
    <property type="match status" value="1"/>
</dbReference>
<reference key="1">
    <citation type="journal article" date="2003" name="Proc. Natl. Acad. Sci. U.S.A.">
        <title>Complete genome sequence of the marine planctomycete Pirellula sp. strain 1.</title>
        <authorList>
            <person name="Gloeckner F.O."/>
            <person name="Kube M."/>
            <person name="Bauer M."/>
            <person name="Teeling H."/>
            <person name="Lombardot T."/>
            <person name="Ludwig W."/>
            <person name="Gade D."/>
            <person name="Beck A."/>
            <person name="Borzym K."/>
            <person name="Heitmann K."/>
            <person name="Rabus R."/>
            <person name="Schlesner H."/>
            <person name="Amann R."/>
            <person name="Reinhardt R."/>
        </authorList>
    </citation>
    <scope>NUCLEOTIDE SEQUENCE [LARGE SCALE GENOMIC DNA]</scope>
    <source>
        <strain>DSM 10527 / NCIMB 13988 / SH1</strain>
    </source>
</reference>
<feature type="chain" id="PRO_0000111837" description="5'-nucleotidase SurE">
    <location>
        <begin position="1"/>
        <end position="253"/>
    </location>
</feature>
<feature type="binding site" evidence="1">
    <location>
        <position position="8"/>
    </location>
    <ligand>
        <name>a divalent metal cation</name>
        <dbReference type="ChEBI" id="CHEBI:60240"/>
    </ligand>
</feature>
<feature type="binding site" evidence="1">
    <location>
        <position position="9"/>
    </location>
    <ligand>
        <name>a divalent metal cation</name>
        <dbReference type="ChEBI" id="CHEBI:60240"/>
    </ligand>
</feature>
<feature type="binding site" evidence="1">
    <location>
        <position position="39"/>
    </location>
    <ligand>
        <name>a divalent metal cation</name>
        <dbReference type="ChEBI" id="CHEBI:60240"/>
    </ligand>
</feature>
<feature type="binding site" evidence="1">
    <location>
        <position position="96"/>
    </location>
    <ligand>
        <name>a divalent metal cation</name>
        <dbReference type="ChEBI" id="CHEBI:60240"/>
    </ligand>
</feature>
<evidence type="ECO:0000255" key="1">
    <source>
        <dbReference type="HAMAP-Rule" id="MF_00060"/>
    </source>
</evidence>
<evidence type="ECO:0000305" key="2"/>
<protein>
    <recommendedName>
        <fullName evidence="1">5'-nucleotidase SurE</fullName>
        <ecNumber evidence="1">3.1.3.5</ecNumber>
    </recommendedName>
    <alternativeName>
        <fullName evidence="1">Nucleoside 5'-monophosphate phosphohydrolase</fullName>
    </alternativeName>
</protein>
<name>SURE_RHOBA</name>
<accession>Q7UKT6</accession>
<sequence>MRILLTNDDGVHAPGLAALRQQLRHLGEVITVAPATEQSGVGHSITYLTPLVPKSIHRDGVHWAWAVEGSPADCVKLSLAELFVDEPIDLVVSGINNGLNAGINVLYSGTVAAAIEGAFFGVTSVAVSLENSDDNDFDAAAVIARNVIGEIVRHEESRGGLFNLNVPTAATESASEVKVVPMGLAQYGRRYEKRQDPGGRDYYWALWTQPDKPPAEMTDVTQLREGCVTLTPLHFNLTRDDLLSEMKDWNLRP</sequence>